<name>EFTU_BIFLS</name>
<dbReference type="EC" id="3.6.5.3" evidence="2"/>
<dbReference type="EMBL" id="CP001095">
    <property type="protein sequence ID" value="ACJ52992.1"/>
    <property type="molecule type" value="Genomic_DNA"/>
</dbReference>
<dbReference type="EMBL" id="AP010889">
    <property type="protein sequence ID" value="BAJ69571.1"/>
    <property type="molecule type" value="Genomic_DNA"/>
</dbReference>
<dbReference type="RefSeq" id="WP_012578201.1">
    <property type="nucleotide sequence ID" value="NZ_JDTT01000057.1"/>
</dbReference>
<dbReference type="SMR" id="B7GU46"/>
<dbReference type="KEGG" id="bln:Blon_1922"/>
<dbReference type="KEGG" id="blon:BLIJ_1993"/>
<dbReference type="PATRIC" id="fig|391904.8.peg.1999"/>
<dbReference type="HOGENOM" id="CLU_007265_0_1_11"/>
<dbReference type="Proteomes" id="UP000001360">
    <property type="component" value="Chromosome"/>
</dbReference>
<dbReference type="GO" id="GO:0005829">
    <property type="term" value="C:cytosol"/>
    <property type="evidence" value="ECO:0007669"/>
    <property type="project" value="TreeGrafter"/>
</dbReference>
<dbReference type="GO" id="GO:0005525">
    <property type="term" value="F:GTP binding"/>
    <property type="evidence" value="ECO:0007669"/>
    <property type="project" value="UniProtKB-UniRule"/>
</dbReference>
<dbReference type="GO" id="GO:0003924">
    <property type="term" value="F:GTPase activity"/>
    <property type="evidence" value="ECO:0007669"/>
    <property type="project" value="InterPro"/>
</dbReference>
<dbReference type="GO" id="GO:0003746">
    <property type="term" value="F:translation elongation factor activity"/>
    <property type="evidence" value="ECO:0007669"/>
    <property type="project" value="UniProtKB-UniRule"/>
</dbReference>
<dbReference type="CDD" id="cd01884">
    <property type="entry name" value="EF_Tu"/>
    <property type="match status" value="1"/>
</dbReference>
<dbReference type="CDD" id="cd03697">
    <property type="entry name" value="EFTU_II"/>
    <property type="match status" value="1"/>
</dbReference>
<dbReference type="CDD" id="cd03707">
    <property type="entry name" value="EFTU_III"/>
    <property type="match status" value="1"/>
</dbReference>
<dbReference type="FunFam" id="2.40.30.10:FF:000001">
    <property type="entry name" value="Elongation factor Tu"/>
    <property type="match status" value="1"/>
</dbReference>
<dbReference type="FunFam" id="3.40.50.300:FF:000003">
    <property type="entry name" value="Elongation factor Tu"/>
    <property type="match status" value="1"/>
</dbReference>
<dbReference type="Gene3D" id="3.40.50.300">
    <property type="entry name" value="P-loop containing nucleotide triphosphate hydrolases"/>
    <property type="match status" value="1"/>
</dbReference>
<dbReference type="Gene3D" id="2.40.30.10">
    <property type="entry name" value="Translation factors"/>
    <property type="match status" value="2"/>
</dbReference>
<dbReference type="HAMAP" id="MF_00118_B">
    <property type="entry name" value="EF_Tu_B"/>
    <property type="match status" value="1"/>
</dbReference>
<dbReference type="InterPro" id="IPR041709">
    <property type="entry name" value="EF-Tu_GTP-bd"/>
</dbReference>
<dbReference type="InterPro" id="IPR050055">
    <property type="entry name" value="EF-Tu_GTPase"/>
</dbReference>
<dbReference type="InterPro" id="IPR004161">
    <property type="entry name" value="EFTu-like_2"/>
</dbReference>
<dbReference type="InterPro" id="IPR033720">
    <property type="entry name" value="EFTU_2"/>
</dbReference>
<dbReference type="InterPro" id="IPR031157">
    <property type="entry name" value="G_TR_CS"/>
</dbReference>
<dbReference type="InterPro" id="IPR027417">
    <property type="entry name" value="P-loop_NTPase"/>
</dbReference>
<dbReference type="InterPro" id="IPR005225">
    <property type="entry name" value="Small_GTP-bd"/>
</dbReference>
<dbReference type="InterPro" id="IPR000795">
    <property type="entry name" value="T_Tr_GTP-bd_dom"/>
</dbReference>
<dbReference type="InterPro" id="IPR009000">
    <property type="entry name" value="Transl_B-barrel_sf"/>
</dbReference>
<dbReference type="InterPro" id="IPR009001">
    <property type="entry name" value="Transl_elong_EF1A/Init_IF2_C"/>
</dbReference>
<dbReference type="InterPro" id="IPR004541">
    <property type="entry name" value="Transl_elong_EFTu/EF1A_bac/org"/>
</dbReference>
<dbReference type="InterPro" id="IPR004160">
    <property type="entry name" value="Transl_elong_EFTu/EF1A_C"/>
</dbReference>
<dbReference type="NCBIfam" id="TIGR00485">
    <property type="entry name" value="EF-Tu"/>
    <property type="match status" value="1"/>
</dbReference>
<dbReference type="NCBIfam" id="NF000766">
    <property type="entry name" value="PRK00049.1"/>
    <property type="match status" value="1"/>
</dbReference>
<dbReference type="NCBIfam" id="NF009372">
    <property type="entry name" value="PRK12735.1"/>
    <property type="match status" value="1"/>
</dbReference>
<dbReference type="NCBIfam" id="NF009373">
    <property type="entry name" value="PRK12736.1"/>
    <property type="match status" value="1"/>
</dbReference>
<dbReference type="NCBIfam" id="TIGR00231">
    <property type="entry name" value="small_GTP"/>
    <property type="match status" value="1"/>
</dbReference>
<dbReference type="PANTHER" id="PTHR43721:SF22">
    <property type="entry name" value="ELONGATION FACTOR TU, MITOCHONDRIAL"/>
    <property type="match status" value="1"/>
</dbReference>
<dbReference type="PANTHER" id="PTHR43721">
    <property type="entry name" value="ELONGATION FACTOR TU-RELATED"/>
    <property type="match status" value="1"/>
</dbReference>
<dbReference type="Pfam" id="PF00009">
    <property type="entry name" value="GTP_EFTU"/>
    <property type="match status" value="1"/>
</dbReference>
<dbReference type="Pfam" id="PF03144">
    <property type="entry name" value="GTP_EFTU_D2"/>
    <property type="match status" value="1"/>
</dbReference>
<dbReference type="Pfam" id="PF03143">
    <property type="entry name" value="GTP_EFTU_D3"/>
    <property type="match status" value="1"/>
</dbReference>
<dbReference type="PRINTS" id="PR00315">
    <property type="entry name" value="ELONGATNFCT"/>
</dbReference>
<dbReference type="SUPFAM" id="SSF50465">
    <property type="entry name" value="EF-Tu/eEF-1alpha/eIF2-gamma C-terminal domain"/>
    <property type="match status" value="1"/>
</dbReference>
<dbReference type="SUPFAM" id="SSF52540">
    <property type="entry name" value="P-loop containing nucleoside triphosphate hydrolases"/>
    <property type="match status" value="1"/>
</dbReference>
<dbReference type="SUPFAM" id="SSF50447">
    <property type="entry name" value="Translation proteins"/>
    <property type="match status" value="1"/>
</dbReference>
<dbReference type="PROSITE" id="PS00301">
    <property type="entry name" value="G_TR_1"/>
    <property type="match status" value="1"/>
</dbReference>
<dbReference type="PROSITE" id="PS51722">
    <property type="entry name" value="G_TR_2"/>
    <property type="match status" value="1"/>
</dbReference>
<keyword id="KW-0963">Cytoplasm</keyword>
<keyword id="KW-0251">Elongation factor</keyword>
<keyword id="KW-0342">GTP-binding</keyword>
<keyword id="KW-0378">Hydrolase</keyword>
<keyword id="KW-0460">Magnesium</keyword>
<keyword id="KW-0479">Metal-binding</keyword>
<keyword id="KW-0547">Nucleotide-binding</keyword>
<keyword id="KW-0648">Protein biosynthesis</keyword>
<gene>
    <name evidence="2" type="primary">tuf</name>
    <name type="ordered locus">Blon_1922</name>
    <name type="ordered locus">BLIJ_1993</name>
</gene>
<evidence type="ECO:0000250" key="1"/>
<evidence type="ECO:0000255" key="2">
    <source>
        <dbReference type="HAMAP-Rule" id="MF_00118"/>
    </source>
</evidence>
<protein>
    <recommendedName>
        <fullName evidence="2">Elongation factor Tu</fullName>
        <shortName evidence="2">EF-Tu</shortName>
        <ecNumber evidence="2">3.6.5.3</ecNumber>
    </recommendedName>
</protein>
<reference key="1">
    <citation type="journal article" date="2008" name="Proc. Natl. Acad. Sci. U.S.A.">
        <title>The genome sequence of Bifidobacterium longum subsp. infantis reveals adaptations for milk utilization within the infant microbiome.</title>
        <authorList>
            <person name="Sela D.A."/>
            <person name="Chapman J."/>
            <person name="Adeuya A."/>
            <person name="Kim J.H."/>
            <person name="Chen F."/>
            <person name="Whitehead T.R."/>
            <person name="Lapidus A."/>
            <person name="Rokhsar D.S."/>
            <person name="Lebrilla C.B."/>
            <person name="German J.B."/>
            <person name="Price N.P."/>
            <person name="Richardson P.M."/>
            <person name="Mills D.A."/>
        </authorList>
    </citation>
    <scope>NUCLEOTIDE SEQUENCE [LARGE SCALE GENOMIC DNA]</scope>
    <source>
        <strain>ATCC 15697 / DSM 20088 / JCM 1222 / NCTC 11817 / S12</strain>
    </source>
</reference>
<reference key="2">
    <citation type="journal article" date="2011" name="Nature">
        <title>Bifidobacteria can protect from enteropathogenic infection through production of acetate.</title>
        <authorList>
            <person name="Fukuda S."/>
            <person name="Toh H."/>
            <person name="Hase K."/>
            <person name="Oshima K."/>
            <person name="Nakanishi Y."/>
            <person name="Yoshimura K."/>
            <person name="Tobe T."/>
            <person name="Clarke J.M."/>
            <person name="Topping D.L."/>
            <person name="Suzuki T."/>
            <person name="Taylor T.D."/>
            <person name="Itoh K."/>
            <person name="Kikuchi J."/>
            <person name="Morita H."/>
            <person name="Hattori M."/>
            <person name="Ohno H."/>
        </authorList>
    </citation>
    <scope>NUCLEOTIDE SEQUENCE [LARGE SCALE GENOMIC DNA]</scope>
    <source>
        <strain>ATCC 15697 / DSM 20088 / JCM 1222 / NCTC 11817 / S12</strain>
    </source>
</reference>
<comment type="function">
    <text evidence="2">GTP hydrolase that promotes the GTP-dependent binding of aminoacyl-tRNA to the A-site of ribosomes during protein biosynthesis.</text>
</comment>
<comment type="catalytic activity">
    <reaction evidence="2">
        <text>GTP + H2O = GDP + phosphate + H(+)</text>
        <dbReference type="Rhea" id="RHEA:19669"/>
        <dbReference type="ChEBI" id="CHEBI:15377"/>
        <dbReference type="ChEBI" id="CHEBI:15378"/>
        <dbReference type="ChEBI" id="CHEBI:37565"/>
        <dbReference type="ChEBI" id="CHEBI:43474"/>
        <dbReference type="ChEBI" id="CHEBI:58189"/>
        <dbReference type="EC" id="3.6.5.3"/>
    </reaction>
    <physiologicalReaction direction="left-to-right" evidence="2">
        <dbReference type="Rhea" id="RHEA:19670"/>
    </physiologicalReaction>
</comment>
<comment type="subunit">
    <text evidence="2">Monomer.</text>
</comment>
<comment type="subcellular location">
    <subcellularLocation>
        <location evidence="2">Cytoplasm</location>
    </subcellularLocation>
</comment>
<comment type="similarity">
    <text evidence="2">Belongs to the TRAFAC class translation factor GTPase superfamily. Classic translation factor GTPase family. EF-Tu/EF-1A subfamily.</text>
</comment>
<feature type="chain" id="PRO_1000201388" description="Elongation factor Tu">
    <location>
        <begin position="1"/>
        <end position="399"/>
    </location>
</feature>
<feature type="domain" description="tr-type G">
    <location>
        <begin position="10"/>
        <end position="209"/>
    </location>
</feature>
<feature type="region of interest" description="G1" evidence="1">
    <location>
        <begin position="19"/>
        <end position="26"/>
    </location>
</feature>
<feature type="region of interest" description="G2" evidence="1">
    <location>
        <begin position="62"/>
        <end position="66"/>
    </location>
</feature>
<feature type="region of interest" description="G3" evidence="1">
    <location>
        <begin position="83"/>
        <end position="86"/>
    </location>
</feature>
<feature type="region of interest" description="G4" evidence="1">
    <location>
        <begin position="138"/>
        <end position="141"/>
    </location>
</feature>
<feature type="region of interest" description="G5" evidence="1">
    <location>
        <begin position="175"/>
        <end position="177"/>
    </location>
</feature>
<feature type="binding site" evidence="2">
    <location>
        <begin position="19"/>
        <end position="26"/>
    </location>
    <ligand>
        <name>GTP</name>
        <dbReference type="ChEBI" id="CHEBI:37565"/>
    </ligand>
</feature>
<feature type="binding site" evidence="2">
    <location>
        <position position="26"/>
    </location>
    <ligand>
        <name>Mg(2+)</name>
        <dbReference type="ChEBI" id="CHEBI:18420"/>
    </ligand>
</feature>
<feature type="binding site" evidence="2">
    <location>
        <begin position="83"/>
        <end position="87"/>
    </location>
    <ligand>
        <name>GTP</name>
        <dbReference type="ChEBI" id="CHEBI:37565"/>
    </ligand>
</feature>
<feature type="binding site" evidence="2">
    <location>
        <begin position="138"/>
        <end position="141"/>
    </location>
    <ligand>
        <name>GTP</name>
        <dbReference type="ChEBI" id="CHEBI:37565"/>
    </ligand>
</feature>
<organism>
    <name type="scientific">Bifidobacterium longum subsp. infantis (strain ATCC 15697 / DSM 20088 / JCM 1222 / NCTC 11817 / S12)</name>
    <dbReference type="NCBI Taxonomy" id="391904"/>
    <lineage>
        <taxon>Bacteria</taxon>
        <taxon>Bacillati</taxon>
        <taxon>Actinomycetota</taxon>
        <taxon>Actinomycetes</taxon>
        <taxon>Bifidobacteriales</taxon>
        <taxon>Bifidobacteriaceae</taxon>
        <taxon>Bifidobacterium</taxon>
    </lineage>
</organism>
<proteinExistence type="inferred from homology"/>
<sequence>MAKEKYERTKPHVNIGTIGHVDHGKTTLTAAISKVLHEEFPDVNPEYDFNQIDSAPEEAARGITINIAHIEYQTEKRHYAHVDCPGHADFVKNMITGAAQMDGAILVVAATDGPMAQTREHVLLARQVGVPKILVALNKCDMVDDEELIELVEEEVRDLLDENGFDRDCPVIHTSAYGALHDDAPDHEKWVQSVKDLMAAVDDYIPTPVHDLDKPFLMPIEDVFTISGRGTVVTGRVERGQLAVNTPVEIVGIRPTQTTTVTSIETFHKTMDACEAGDNTGLLLRGLGREDVERGQVVAKPGSVTPHTKFEGEVYVLTKDEGGRHSPFFSNYRPQFYFRTTDVTGVIELPEGVEMVQPGDHATFTVELIQPIAMEEGLTFAVREGGHTVGSGRVTKILA</sequence>
<accession>B7GU46</accession>
<accession>E8MLZ4</accession>